<organism>
    <name type="scientific">Paramagnetospirillum magneticum (strain ATCC 700264 / AMB-1)</name>
    <name type="common">Magnetospirillum magneticum</name>
    <dbReference type="NCBI Taxonomy" id="342108"/>
    <lineage>
        <taxon>Bacteria</taxon>
        <taxon>Pseudomonadati</taxon>
        <taxon>Pseudomonadota</taxon>
        <taxon>Alphaproteobacteria</taxon>
        <taxon>Rhodospirillales</taxon>
        <taxon>Magnetospirillaceae</taxon>
        <taxon>Paramagnetospirillum</taxon>
    </lineage>
</organism>
<protein>
    <recommendedName>
        <fullName evidence="1">Ribosomal RNA large subunit methyltransferase H</fullName>
        <ecNumber evidence="1">2.1.1.177</ecNumber>
    </recommendedName>
    <alternativeName>
        <fullName evidence="1">23S rRNA (pseudouridine1915-N3)-methyltransferase</fullName>
    </alternativeName>
    <alternativeName>
        <fullName evidence="1">23S rRNA m3Psi1915 methyltransferase</fullName>
    </alternativeName>
    <alternativeName>
        <fullName evidence="1">rRNA (pseudouridine-N3-)-methyltransferase RlmH</fullName>
    </alternativeName>
</protein>
<feature type="chain" id="PRO_0000260567" description="Ribosomal RNA large subunit methyltransferase H">
    <location>
        <begin position="1"/>
        <end position="152"/>
    </location>
</feature>
<feature type="binding site" evidence="1">
    <location>
        <position position="68"/>
    </location>
    <ligand>
        <name>S-adenosyl-L-methionine</name>
        <dbReference type="ChEBI" id="CHEBI:59789"/>
    </ligand>
</feature>
<feature type="binding site" evidence="1">
    <location>
        <position position="100"/>
    </location>
    <ligand>
        <name>S-adenosyl-L-methionine</name>
        <dbReference type="ChEBI" id="CHEBI:59789"/>
    </ligand>
</feature>
<feature type="binding site" evidence="1">
    <location>
        <begin position="119"/>
        <end position="124"/>
    </location>
    <ligand>
        <name>S-adenosyl-L-methionine</name>
        <dbReference type="ChEBI" id="CHEBI:59789"/>
    </ligand>
</feature>
<accession>Q2VZT7</accession>
<sequence length="152" mass="16959">MRLLIAAVGKAKAGPEQDLFRQYCRRLSPPPVLKEVEEKRPLAGPQLKAREAELLLATLPEGAKVVALDEKGRDIGSVDFAHRLRDWRDSGCQDVAFLIGGADGHGDAVRERADLLLSFGRMTWPHMLVRALLAEQLWRAHSILTGHPYHRP</sequence>
<evidence type="ECO:0000255" key="1">
    <source>
        <dbReference type="HAMAP-Rule" id="MF_00658"/>
    </source>
</evidence>
<name>RLMH_PARM1</name>
<comment type="function">
    <text evidence="1">Specifically methylates the pseudouridine at position 1915 (m3Psi1915) in 23S rRNA.</text>
</comment>
<comment type="catalytic activity">
    <reaction evidence="1">
        <text>pseudouridine(1915) in 23S rRNA + S-adenosyl-L-methionine = N(3)-methylpseudouridine(1915) in 23S rRNA + S-adenosyl-L-homocysteine + H(+)</text>
        <dbReference type="Rhea" id="RHEA:42752"/>
        <dbReference type="Rhea" id="RHEA-COMP:10221"/>
        <dbReference type="Rhea" id="RHEA-COMP:10222"/>
        <dbReference type="ChEBI" id="CHEBI:15378"/>
        <dbReference type="ChEBI" id="CHEBI:57856"/>
        <dbReference type="ChEBI" id="CHEBI:59789"/>
        <dbReference type="ChEBI" id="CHEBI:65314"/>
        <dbReference type="ChEBI" id="CHEBI:74486"/>
        <dbReference type="EC" id="2.1.1.177"/>
    </reaction>
</comment>
<comment type="subunit">
    <text evidence="1">Homodimer.</text>
</comment>
<comment type="subcellular location">
    <subcellularLocation>
        <location evidence="1">Cytoplasm</location>
    </subcellularLocation>
</comment>
<comment type="similarity">
    <text evidence="1">Belongs to the RNA methyltransferase RlmH family.</text>
</comment>
<dbReference type="EC" id="2.1.1.177" evidence="1"/>
<dbReference type="EMBL" id="AP007255">
    <property type="protein sequence ID" value="BAE52888.1"/>
    <property type="molecule type" value="Genomic_DNA"/>
</dbReference>
<dbReference type="RefSeq" id="WP_011386434.1">
    <property type="nucleotide sequence ID" value="NC_007626.1"/>
</dbReference>
<dbReference type="SMR" id="Q2VZT7"/>
<dbReference type="STRING" id="342108.amb4084"/>
<dbReference type="KEGG" id="mag:amb4084"/>
<dbReference type="HOGENOM" id="CLU_100552_1_1_5"/>
<dbReference type="OrthoDB" id="9806643at2"/>
<dbReference type="Proteomes" id="UP000007058">
    <property type="component" value="Chromosome"/>
</dbReference>
<dbReference type="GO" id="GO:0005737">
    <property type="term" value="C:cytoplasm"/>
    <property type="evidence" value="ECO:0007669"/>
    <property type="project" value="UniProtKB-SubCell"/>
</dbReference>
<dbReference type="GO" id="GO:0070038">
    <property type="term" value="F:rRNA (pseudouridine-N3-)-methyltransferase activity"/>
    <property type="evidence" value="ECO:0007669"/>
    <property type="project" value="UniProtKB-UniRule"/>
</dbReference>
<dbReference type="CDD" id="cd18081">
    <property type="entry name" value="RlmH-like"/>
    <property type="match status" value="1"/>
</dbReference>
<dbReference type="Gene3D" id="3.40.1280.10">
    <property type="match status" value="1"/>
</dbReference>
<dbReference type="HAMAP" id="MF_00658">
    <property type="entry name" value="23SrRNA_methyltr_H"/>
    <property type="match status" value="1"/>
</dbReference>
<dbReference type="InterPro" id="IPR029028">
    <property type="entry name" value="Alpha/beta_knot_MTases"/>
</dbReference>
<dbReference type="InterPro" id="IPR003742">
    <property type="entry name" value="RlmH-like"/>
</dbReference>
<dbReference type="InterPro" id="IPR029026">
    <property type="entry name" value="tRNA_m1G_MTases_N"/>
</dbReference>
<dbReference type="NCBIfam" id="NF000989">
    <property type="entry name" value="PRK00103.2-3"/>
    <property type="match status" value="1"/>
</dbReference>
<dbReference type="PANTHER" id="PTHR33603">
    <property type="entry name" value="METHYLTRANSFERASE"/>
    <property type="match status" value="1"/>
</dbReference>
<dbReference type="PANTHER" id="PTHR33603:SF1">
    <property type="entry name" value="RIBOSOMAL RNA LARGE SUBUNIT METHYLTRANSFERASE H"/>
    <property type="match status" value="1"/>
</dbReference>
<dbReference type="Pfam" id="PF02590">
    <property type="entry name" value="SPOUT_MTase"/>
    <property type="match status" value="1"/>
</dbReference>
<dbReference type="PIRSF" id="PIRSF004505">
    <property type="entry name" value="MT_bac"/>
    <property type="match status" value="1"/>
</dbReference>
<dbReference type="SUPFAM" id="SSF75217">
    <property type="entry name" value="alpha/beta knot"/>
    <property type="match status" value="1"/>
</dbReference>
<keyword id="KW-0963">Cytoplasm</keyword>
<keyword id="KW-0489">Methyltransferase</keyword>
<keyword id="KW-0698">rRNA processing</keyword>
<keyword id="KW-0949">S-adenosyl-L-methionine</keyword>
<keyword id="KW-0808">Transferase</keyword>
<reference key="1">
    <citation type="journal article" date="2005" name="DNA Res.">
        <title>Complete genome sequence of the facultative anaerobic magnetotactic bacterium Magnetospirillum sp. strain AMB-1.</title>
        <authorList>
            <person name="Matsunaga T."/>
            <person name="Okamura Y."/>
            <person name="Fukuda Y."/>
            <person name="Wahyudi A.T."/>
            <person name="Murase Y."/>
            <person name="Takeyama H."/>
        </authorList>
    </citation>
    <scope>NUCLEOTIDE SEQUENCE [LARGE SCALE GENOMIC DNA]</scope>
    <source>
        <strain>ATCC 700264 / AMB-1</strain>
    </source>
</reference>
<gene>
    <name evidence="1" type="primary">rlmH</name>
    <name type="ordered locus">amb4084</name>
</gene>
<proteinExistence type="inferred from homology"/>